<feature type="chain" id="PRO_0000110818" description="Aspartate--tRNA(Asp/Asn) ligase">
    <location>
        <begin position="1"/>
        <end position="603"/>
    </location>
</feature>
<feature type="region of interest" description="Aspartate" evidence="1">
    <location>
        <begin position="206"/>
        <end position="209"/>
    </location>
</feature>
<feature type="binding site" evidence="1">
    <location>
        <position position="182"/>
    </location>
    <ligand>
        <name>L-aspartate</name>
        <dbReference type="ChEBI" id="CHEBI:29991"/>
    </ligand>
</feature>
<feature type="binding site" evidence="1">
    <location>
        <begin position="228"/>
        <end position="230"/>
    </location>
    <ligand>
        <name>ATP</name>
        <dbReference type="ChEBI" id="CHEBI:30616"/>
    </ligand>
</feature>
<feature type="binding site" evidence="1">
    <location>
        <position position="228"/>
    </location>
    <ligand>
        <name>L-aspartate</name>
        <dbReference type="ChEBI" id="CHEBI:29991"/>
    </ligand>
</feature>
<feature type="binding site" evidence="1">
    <location>
        <position position="237"/>
    </location>
    <ligand>
        <name>ATP</name>
        <dbReference type="ChEBI" id="CHEBI:30616"/>
    </ligand>
</feature>
<feature type="binding site" evidence="1">
    <location>
        <position position="454"/>
    </location>
    <ligand>
        <name>L-aspartate</name>
        <dbReference type="ChEBI" id="CHEBI:29991"/>
    </ligand>
</feature>
<feature type="binding site" evidence="1">
    <location>
        <position position="500"/>
    </location>
    <ligand>
        <name>ATP</name>
        <dbReference type="ChEBI" id="CHEBI:30616"/>
    </ligand>
</feature>
<feature type="binding site" evidence="1">
    <location>
        <position position="507"/>
    </location>
    <ligand>
        <name>L-aspartate</name>
        <dbReference type="ChEBI" id="CHEBI:29991"/>
    </ligand>
</feature>
<feature type="binding site" evidence="1">
    <location>
        <begin position="552"/>
        <end position="555"/>
    </location>
    <ligand>
        <name>ATP</name>
        <dbReference type="ChEBI" id="CHEBI:30616"/>
    </ligand>
</feature>
<feature type="site" description="Important for tRNA non-discrimination" evidence="1">
    <location>
        <position position="38"/>
    </location>
</feature>
<feature type="site" description="Important for tRNA non-discrimination" evidence="1">
    <location>
        <position position="90"/>
    </location>
</feature>
<sequence length="603" mass="69729">MLTEYGDFKRTKYCGEVSEEDIGKEVKLAGWVHRKRHHGGVIFIDLRDREGIVQVVVEEKTNPEAYEVADKLKSEYVIGVVGKVRKRPEGTENPKLKTGYVEVVADRILVFNTSEALPFPVEEETHVSEETKLKYRYIDLRRESMKNNLIFRHRVYQITRNFFTKEGFIEIETPFLTKSTPEGARDFLVPSRLHPGKFYALPQSPQLFKQILMIAGFDRYFQIVKCFRDEDLRADRQPEFTQIDYEMSFVSEEEVMDVAERLIATLFKELLGVELKTPFERISYREAMEKYGTDKPDRRFGLELIELTDIFKNTAFKVFKSVVEAGGIIKAINFKGSNLSRKEIDELTKFVQSLGAKGLAWIKVEKDKLTSPIVKFFTEEETQKLLERTKAEPGDVILFSADKKEMVYKILGNLRLHLGKKYKLIDESKWDVFWIVDFPLMEWDEEEERFVSLHHPFTMPREENIPKLKEALEEEDLEKKKEIVHSVRARAYDMVLNGEEIGGGSIRIHRRDIQEVVFKLLGIGEVEAQEKFGFLLEALKYGAPPHGGLAFGLDRVVALMLGLDSIRDTIAFPKTQRGICPLTGAPDYVDPKQLKELHIKVLE</sequence>
<evidence type="ECO:0000255" key="1">
    <source>
        <dbReference type="HAMAP-Rule" id="MF_00044"/>
    </source>
</evidence>
<protein>
    <recommendedName>
        <fullName evidence="1">Aspartate--tRNA(Asp/Asn) ligase</fullName>
        <ecNumber evidence="1">6.1.1.23</ecNumber>
    </recommendedName>
    <alternativeName>
        <fullName evidence="1">Aspartyl-tRNA synthetase</fullName>
        <shortName evidence="1">AspRS</shortName>
    </alternativeName>
    <alternativeName>
        <fullName evidence="1">Non-discriminating aspartyl-tRNA synthetase</fullName>
        <shortName evidence="1">ND-AspRS</shortName>
    </alternativeName>
</protein>
<comment type="function">
    <text evidence="1">Aspartyl-tRNA synthetase with relaxed tRNA specificity since it is able to aspartylate not only its cognate tRNA(Asp) but also tRNA(Asn). Reaction proceeds in two steps: L-aspartate is first activated by ATP to form Asp-AMP and then transferred to the acceptor end of tRNA(Asp/Asn).</text>
</comment>
<comment type="catalytic activity">
    <reaction evidence="1">
        <text>tRNA(Asx) + L-aspartate + ATP = L-aspartyl-tRNA(Asx) + AMP + diphosphate</text>
        <dbReference type="Rhea" id="RHEA:18349"/>
        <dbReference type="Rhea" id="RHEA-COMP:9710"/>
        <dbReference type="Rhea" id="RHEA-COMP:9711"/>
        <dbReference type="ChEBI" id="CHEBI:29991"/>
        <dbReference type="ChEBI" id="CHEBI:30616"/>
        <dbReference type="ChEBI" id="CHEBI:33019"/>
        <dbReference type="ChEBI" id="CHEBI:78442"/>
        <dbReference type="ChEBI" id="CHEBI:78516"/>
        <dbReference type="ChEBI" id="CHEBI:456215"/>
        <dbReference type="EC" id="6.1.1.23"/>
    </reaction>
</comment>
<comment type="subunit">
    <text evidence="1">Homodimer.</text>
</comment>
<comment type="subcellular location">
    <subcellularLocation>
        <location evidence="1">Cytoplasm</location>
    </subcellularLocation>
</comment>
<comment type="similarity">
    <text evidence="1">Belongs to the class-II aminoacyl-tRNA synthetase family. Type 1 subfamily.</text>
</comment>
<keyword id="KW-0030">Aminoacyl-tRNA synthetase</keyword>
<keyword id="KW-0067">ATP-binding</keyword>
<keyword id="KW-0963">Cytoplasm</keyword>
<keyword id="KW-0436">Ligase</keyword>
<keyword id="KW-0547">Nucleotide-binding</keyword>
<keyword id="KW-0648">Protein biosynthesis</keyword>
<keyword id="KW-1185">Reference proteome</keyword>
<proteinExistence type="inferred from homology"/>
<organism>
    <name type="scientific">Aquifex aeolicus (strain VF5)</name>
    <dbReference type="NCBI Taxonomy" id="224324"/>
    <lineage>
        <taxon>Bacteria</taxon>
        <taxon>Pseudomonadati</taxon>
        <taxon>Aquificota</taxon>
        <taxon>Aquificia</taxon>
        <taxon>Aquificales</taxon>
        <taxon>Aquificaceae</taxon>
        <taxon>Aquifex</taxon>
    </lineage>
</organism>
<accession>O67589</accession>
<name>SYDND_AQUAE</name>
<dbReference type="EC" id="6.1.1.23" evidence="1"/>
<dbReference type="EMBL" id="AE000657">
    <property type="protein sequence ID" value="AAC07548.1"/>
    <property type="molecule type" value="Genomic_DNA"/>
</dbReference>
<dbReference type="PIR" id="D70445">
    <property type="entry name" value="D70445"/>
</dbReference>
<dbReference type="RefSeq" id="NP_214155.1">
    <property type="nucleotide sequence ID" value="NC_000918.1"/>
</dbReference>
<dbReference type="RefSeq" id="WP_010881092.1">
    <property type="nucleotide sequence ID" value="NC_000918.1"/>
</dbReference>
<dbReference type="SMR" id="O67589"/>
<dbReference type="FunCoup" id="O67589">
    <property type="interactions" value="471"/>
</dbReference>
<dbReference type="STRING" id="224324.aq_1677"/>
<dbReference type="EnsemblBacteria" id="AAC07548">
    <property type="protein sequence ID" value="AAC07548"/>
    <property type="gene ID" value="aq_1677"/>
</dbReference>
<dbReference type="KEGG" id="aae:aq_1677"/>
<dbReference type="PATRIC" id="fig|224324.8.peg.1296"/>
<dbReference type="eggNOG" id="COG0173">
    <property type="taxonomic scope" value="Bacteria"/>
</dbReference>
<dbReference type="HOGENOM" id="CLU_014330_3_2_0"/>
<dbReference type="InParanoid" id="O67589"/>
<dbReference type="OrthoDB" id="9802326at2"/>
<dbReference type="Proteomes" id="UP000000798">
    <property type="component" value="Chromosome"/>
</dbReference>
<dbReference type="GO" id="GO:0005737">
    <property type="term" value="C:cytoplasm"/>
    <property type="evidence" value="ECO:0007669"/>
    <property type="project" value="UniProtKB-SubCell"/>
</dbReference>
<dbReference type="GO" id="GO:0004815">
    <property type="term" value="F:aspartate-tRNA ligase activity"/>
    <property type="evidence" value="ECO:0000318"/>
    <property type="project" value="GO_Central"/>
</dbReference>
<dbReference type="GO" id="GO:0050560">
    <property type="term" value="F:aspartate-tRNA(Asn) ligase activity"/>
    <property type="evidence" value="ECO:0007669"/>
    <property type="project" value="UniProtKB-EC"/>
</dbReference>
<dbReference type="GO" id="GO:0005524">
    <property type="term" value="F:ATP binding"/>
    <property type="evidence" value="ECO:0007669"/>
    <property type="project" value="UniProtKB-UniRule"/>
</dbReference>
<dbReference type="GO" id="GO:0003676">
    <property type="term" value="F:nucleic acid binding"/>
    <property type="evidence" value="ECO:0007669"/>
    <property type="project" value="InterPro"/>
</dbReference>
<dbReference type="GO" id="GO:0006422">
    <property type="term" value="P:aspartyl-tRNA aminoacylation"/>
    <property type="evidence" value="ECO:0000318"/>
    <property type="project" value="GO_Central"/>
</dbReference>
<dbReference type="CDD" id="cd00777">
    <property type="entry name" value="AspRS_core"/>
    <property type="match status" value="1"/>
</dbReference>
<dbReference type="CDD" id="cd04317">
    <property type="entry name" value="EcAspRS_like_N"/>
    <property type="match status" value="1"/>
</dbReference>
<dbReference type="Gene3D" id="3.30.930.10">
    <property type="entry name" value="Bira Bifunctional Protein, Domain 2"/>
    <property type="match status" value="1"/>
</dbReference>
<dbReference type="Gene3D" id="3.30.1360.30">
    <property type="entry name" value="GAD-like domain"/>
    <property type="match status" value="1"/>
</dbReference>
<dbReference type="Gene3D" id="2.40.50.140">
    <property type="entry name" value="Nucleic acid-binding proteins"/>
    <property type="match status" value="1"/>
</dbReference>
<dbReference type="HAMAP" id="MF_00044">
    <property type="entry name" value="Asp_tRNA_synth_type1"/>
    <property type="match status" value="1"/>
</dbReference>
<dbReference type="InterPro" id="IPR004364">
    <property type="entry name" value="Aa-tRNA-synt_II"/>
</dbReference>
<dbReference type="InterPro" id="IPR006195">
    <property type="entry name" value="aa-tRNA-synth_II"/>
</dbReference>
<dbReference type="InterPro" id="IPR045864">
    <property type="entry name" value="aa-tRNA-synth_II/BPL/LPL"/>
</dbReference>
<dbReference type="InterPro" id="IPR004524">
    <property type="entry name" value="Asp-tRNA-ligase_1"/>
</dbReference>
<dbReference type="InterPro" id="IPR047089">
    <property type="entry name" value="Asp-tRNA-ligase_1_N"/>
</dbReference>
<dbReference type="InterPro" id="IPR002312">
    <property type="entry name" value="Asp/Asn-tRNA-synth_IIb"/>
</dbReference>
<dbReference type="InterPro" id="IPR047090">
    <property type="entry name" value="AspRS_core"/>
</dbReference>
<dbReference type="InterPro" id="IPR004115">
    <property type="entry name" value="GAD-like_sf"/>
</dbReference>
<dbReference type="InterPro" id="IPR029351">
    <property type="entry name" value="GAD_dom"/>
</dbReference>
<dbReference type="InterPro" id="IPR012340">
    <property type="entry name" value="NA-bd_OB-fold"/>
</dbReference>
<dbReference type="InterPro" id="IPR004365">
    <property type="entry name" value="NA-bd_OB_tRNA"/>
</dbReference>
<dbReference type="NCBIfam" id="TIGR00459">
    <property type="entry name" value="aspS_bact"/>
    <property type="match status" value="1"/>
</dbReference>
<dbReference type="NCBIfam" id="NF001750">
    <property type="entry name" value="PRK00476.1"/>
    <property type="match status" value="1"/>
</dbReference>
<dbReference type="PANTHER" id="PTHR22594:SF5">
    <property type="entry name" value="ASPARTATE--TRNA LIGASE, MITOCHONDRIAL"/>
    <property type="match status" value="1"/>
</dbReference>
<dbReference type="PANTHER" id="PTHR22594">
    <property type="entry name" value="ASPARTYL/LYSYL-TRNA SYNTHETASE"/>
    <property type="match status" value="1"/>
</dbReference>
<dbReference type="Pfam" id="PF02938">
    <property type="entry name" value="GAD"/>
    <property type="match status" value="1"/>
</dbReference>
<dbReference type="Pfam" id="PF00152">
    <property type="entry name" value="tRNA-synt_2"/>
    <property type="match status" value="1"/>
</dbReference>
<dbReference type="Pfam" id="PF01336">
    <property type="entry name" value="tRNA_anti-codon"/>
    <property type="match status" value="1"/>
</dbReference>
<dbReference type="PRINTS" id="PR01042">
    <property type="entry name" value="TRNASYNTHASP"/>
</dbReference>
<dbReference type="SUPFAM" id="SSF55681">
    <property type="entry name" value="Class II aaRS and biotin synthetases"/>
    <property type="match status" value="1"/>
</dbReference>
<dbReference type="SUPFAM" id="SSF55261">
    <property type="entry name" value="GAD domain-like"/>
    <property type="match status" value="1"/>
</dbReference>
<dbReference type="SUPFAM" id="SSF50249">
    <property type="entry name" value="Nucleic acid-binding proteins"/>
    <property type="match status" value="1"/>
</dbReference>
<dbReference type="PROSITE" id="PS50862">
    <property type="entry name" value="AA_TRNA_LIGASE_II"/>
    <property type="match status" value="1"/>
</dbReference>
<gene>
    <name evidence="1" type="primary">aspS</name>
    <name type="ordered locus">aq_1677</name>
</gene>
<reference key="1">
    <citation type="journal article" date="1998" name="Nature">
        <title>The complete genome of the hyperthermophilic bacterium Aquifex aeolicus.</title>
        <authorList>
            <person name="Deckert G."/>
            <person name="Warren P.V."/>
            <person name="Gaasterland T."/>
            <person name="Young W.G."/>
            <person name="Lenox A.L."/>
            <person name="Graham D.E."/>
            <person name="Overbeek R."/>
            <person name="Snead M.A."/>
            <person name="Keller M."/>
            <person name="Aujay M."/>
            <person name="Huber R."/>
            <person name="Feldman R.A."/>
            <person name="Short J.M."/>
            <person name="Olsen G.J."/>
            <person name="Swanson R.V."/>
        </authorList>
    </citation>
    <scope>NUCLEOTIDE SEQUENCE [LARGE SCALE GENOMIC DNA]</scope>
    <source>
        <strain>VF5</strain>
    </source>
</reference>